<feature type="transit peptide" description="Mitochondrion" evidence="2">
    <location>
        <begin position="1"/>
        <end position="15"/>
    </location>
</feature>
<feature type="chain" id="PRO_0000116464" description="Large ribosomal subunit protein mL49">
    <location>
        <begin position="16"/>
        <end position="105"/>
    </location>
</feature>
<name>IMG2_SCHPO</name>
<dbReference type="EMBL" id="CU329670">
    <property type="protein sequence ID" value="CAA93160.1"/>
    <property type="molecule type" value="Genomic_DNA"/>
</dbReference>
<dbReference type="PIR" id="T38761">
    <property type="entry name" value="T38761"/>
</dbReference>
<dbReference type="RefSeq" id="NP_592996.1">
    <property type="nucleotide sequence ID" value="NM_001018395.2"/>
</dbReference>
<dbReference type="SMR" id="Q10139"/>
<dbReference type="BioGRID" id="280049">
    <property type="interactions" value="7"/>
</dbReference>
<dbReference type="ComplexPortal" id="CPX-10323">
    <property type="entry name" value="54S mitochondrial large ribosomal subunit"/>
</dbReference>
<dbReference type="FunCoup" id="Q10139">
    <property type="interactions" value="52"/>
</dbReference>
<dbReference type="STRING" id="284812.Q10139"/>
<dbReference type="iPTMnet" id="Q10139"/>
<dbReference type="PaxDb" id="4896-SPAC3H8.03.1"/>
<dbReference type="EnsemblFungi" id="SPAC3H8.03.1">
    <property type="protein sequence ID" value="SPAC3H8.03.1:pep"/>
    <property type="gene ID" value="SPAC3H8.03"/>
</dbReference>
<dbReference type="GeneID" id="2543635"/>
<dbReference type="KEGG" id="spo:2543635"/>
<dbReference type="PomBase" id="SPAC3H8.03">
    <property type="gene designation" value="img2"/>
</dbReference>
<dbReference type="VEuPathDB" id="FungiDB:SPAC3H8.03"/>
<dbReference type="eggNOG" id="KOG4034">
    <property type="taxonomic scope" value="Eukaryota"/>
</dbReference>
<dbReference type="HOGENOM" id="CLU_085757_4_1_1"/>
<dbReference type="InParanoid" id="Q10139"/>
<dbReference type="OMA" id="FYSTPAY"/>
<dbReference type="PhylomeDB" id="Q10139"/>
<dbReference type="PRO" id="PR:Q10139"/>
<dbReference type="Proteomes" id="UP000002485">
    <property type="component" value="Chromosome I"/>
</dbReference>
<dbReference type="GO" id="GO:0005762">
    <property type="term" value="C:mitochondrial large ribosomal subunit"/>
    <property type="evidence" value="ECO:0000266"/>
    <property type="project" value="PomBase"/>
</dbReference>
<dbReference type="GO" id="GO:0005739">
    <property type="term" value="C:mitochondrion"/>
    <property type="evidence" value="ECO:0007005"/>
    <property type="project" value="PomBase"/>
</dbReference>
<dbReference type="GO" id="GO:0003735">
    <property type="term" value="F:structural constituent of ribosome"/>
    <property type="evidence" value="ECO:0007669"/>
    <property type="project" value="InterPro"/>
</dbReference>
<dbReference type="GO" id="GO:0032543">
    <property type="term" value="P:mitochondrial translation"/>
    <property type="evidence" value="ECO:0000266"/>
    <property type="project" value="PomBase"/>
</dbReference>
<dbReference type="FunFam" id="3.30.780.10:FF:000030">
    <property type="entry name" value="Mitochondrial large ribosomal subunit L49, putative"/>
    <property type="match status" value="1"/>
</dbReference>
<dbReference type="Gene3D" id="3.30.780.10">
    <property type="entry name" value="SUI1-like domain"/>
    <property type="match status" value="1"/>
</dbReference>
<dbReference type="InterPro" id="IPR007740">
    <property type="entry name" value="Ribosomal_mL49"/>
</dbReference>
<dbReference type="PANTHER" id="PTHR13477:SF0">
    <property type="entry name" value="LARGE RIBOSOMAL SUBUNIT PROTEIN ML49"/>
    <property type="match status" value="1"/>
</dbReference>
<dbReference type="PANTHER" id="PTHR13477">
    <property type="entry name" value="MITOCHONDRIAL 39S RIBOSOMAL PROTEIN L49"/>
    <property type="match status" value="1"/>
</dbReference>
<dbReference type="Pfam" id="PF05046">
    <property type="entry name" value="Img2"/>
    <property type="match status" value="1"/>
</dbReference>
<protein>
    <recommendedName>
        <fullName evidence="4">Large ribosomal subunit protein mL49</fullName>
    </recommendedName>
    <alternativeName>
        <fullName>54S ribosomal protein img2, mitochondrial</fullName>
    </alternativeName>
    <alternativeName>
        <fullName>Integrity of mitochondrial genome protein 2</fullName>
    </alternativeName>
</protein>
<comment type="function">
    <text evidence="1">Component of the mitochondrial ribosome (mitoribosome), a dedicated translation machinery responsible for the synthesis of mitochondrial genome-encoded proteins, including at least some of the essential transmembrane subunits of the mitochondrial respiratory chain. The mitoribosomes are attached to the mitochondrial inner membrane and translation products are cotranslationally integrated into the membrane.</text>
</comment>
<comment type="subunit">
    <text evidence="1">Component of the mitochondrial large ribosomal subunit (mt-LSU). Mature yeast 74S mitochondrial ribosomes consist of a small (37S) and a large (54S) subunit. The 37S small subunit contains a 15S ribosomal RNA (15S mt-rRNA) and at least 32 different proteins. The 54S large subunit contains a 21S rRNA (21S mt-rRNA) and at least 45 different proteins.</text>
</comment>
<comment type="subcellular location">
    <subcellularLocation>
        <location evidence="3">Mitochondrion</location>
    </subcellularLocation>
</comment>
<comment type="similarity">
    <text evidence="4">Belongs to the mitochondrion-specific ribosomal protein mL49 family.</text>
</comment>
<evidence type="ECO:0000250" key="1">
    <source>
        <dbReference type="UniProtKB" id="P25642"/>
    </source>
</evidence>
<evidence type="ECO:0000255" key="2"/>
<evidence type="ECO:0000269" key="3">
    <source>
    </source>
</evidence>
<evidence type="ECO:0000305" key="4"/>
<gene>
    <name type="primary">img2</name>
    <name type="ORF">SPAC3H8.03</name>
</gene>
<proteinExistence type="inferred from homology"/>
<reference key="1">
    <citation type="journal article" date="2002" name="Nature">
        <title>The genome sequence of Schizosaccharomyces pombe.</title>
        <authorList>
            <person name="Wood V."/>
            <person name="Gwilliam R."/>
            <person name="Rajandream M.A."/>
            <person name="Lyne M.H."/>
            <person name="Lyne R."/>
            <person name="Stewart A."/>
            <person name="Sgouros J.G."/>
            <person name="Peat N."/>
            <person name="Hayles J."/>
            <person name="Baker S.G."/>
            <person name="Basham D."/>
            <person name="Bowman S."/>
            <person name="Brooks K."/>
            <person name="Brown D."/>
            <person name="Brown S."/>
            <person name="Chillingworth T."/>
            <person name="Churcher C.M."/>
            <person name="Collins M."/>
            <person name="Connor R."/>
            <person name="Cronin A."/>
            <person name="Davis P."/>
            <person name="Feltwell T."/>
            <person name="Fraser A."/>
            <person name="Gentles S."/>
            <person name="Goble A."/>
            <person name="Hamlin N."/>
            <person name="Harris D.E."/>
            <person name="Hidalgo J."/>
            <person name="Hodgson G."/>
            <person name="Holroyd S."/>
            <person name="Hornsby T."/>
            <person name="Howarth S."/>
            <person name="Huckle E.J."/>
            <person name="Hunt S."/>
            <person name="Jagels K."/>
            <person name="James K.D."/>
            <person name="Jones L."/>
            <person name="Jones M."/>
            <person name="Leather S."/>
            <person name="McDonald S."/>
            <person name="McLean J."/>
            <person name="Mooney P."/>
            <person name="Moule S."/>
            <person name="Mungall K.L."/>
            <person name="Murphy L.D."/>
            <person name="Niblett D."/>
            <person name="Odell C."/>
            <person name="Oliver K."/>
            <person name="O'Neil S."/>
            <person name="Pearson D."/>
            <person name="Quail M.A."/>
            <person name="Rabbinowitsch E."/>
            <person name="Rutherford K.M."/>
            <person name="Rutter S."/>
            <person name="Saunders D."/>
            <person name="Seeger K."/>
            <person name="Sharp S."/>
            <person name="Skelton J."/>
            <person name="Simmonds M.N."/>
            <person name="Squares R."/>
            <person name="Squares S."/>
            <person name="Stevens K."/>
            <person name="Taylor K."/>
            <person name="Taylor R.G."/>
            <person name="Tivey A."/>
            <person name="Walsh S.V."/>
            <person name="Warren T."/>
            <person name="Whitehead S."/>
            <person name="Woodward J.R."/>
            <person name="Volckaert G."/>
            <person name="Aert R."/>
            <person name="Robben J."/>
            <person name="Grymonprez B."/>
            <person name="Weltjens I."/>
            <person name="Vanstreels E."/>
            <person name="Rieger M."/>
            <person name="Schaefer M."/>
            <person name="Mueller-Auer S."/>
            <person name="Gabel C."/>
            <person name="Fuchs M."/>
            <person name="Duesterhoeft A."/>
            <person name="Fritzc C."/>
            <person name="Holzer E."/>
            <person name="Moestl D."/>
            <person name="Hilbert H."/>
            <person name="Borzym K."/>
            <person name="Langer I."/>
            <person name="Beck A."/>
            <person name="Lehrach H."/>
            <person name="Reinhardt R."/>
            <person name="Pohl T.M."/>
            <person name="Eger P."/>
            <person name="Zimmermann W."/>
            <person name="Wedler H."/>
            <person name="Wambutt R."/>
            <person name="Purnelle B."/>
            <person name="Goffeau A."/>
            <person name="Cadieu E."/>
            <person name="Dreano S."/>
            <person name="Gloux S."/>
            <person name="Lelaure V."/>
            <person name="Mottier S."/>
            <person name="Galibert F."/>
            <person name="Aves S.J."/>
            <person name="Xiang Z."/>
            <person name="Hunt C."/>
            <person name="Moore K."/>
            <person name="Hurst S.M."/>
            <person name="Lucas M."/>
            <person name="Rochet M."/>
            <person name="Gaillardin C."/>
            <person name="Tallada V.A."/>
            <person name="Garzon A."/>
            <person name="Thode G."/>
            <person name="Daga R.R."/>
            <person name="Cruzado L."/>
            <person name="Jimenez J."/>
            <person name="Sanchez M."/>
            <person name="del Rey F."/>
            <person name="Benito J."/>
            <person name="Dominguez A."/>
            <person name="Revuelta J.L."/>
            <person name="Moreno S."/>
            <person name="Armstrong J."/>
            <person name="Forsburg S.L."/>
            <person name="Cerutti L."/>
            <person name="Lowe T."/>
            <person name="McCombie W.R."/>
            <person name="Paulsen I."/>
            <person name="Potashkin J."/>
            <person name="Shpakovski G.V."/>
            <person name="Ussery D."/>
            <person name="Barrell B.G."/>
            <person name="Nurse P."/>
        </authorList>
    </citation>
    <scope>NUCLEOTIDE SEQUENCE [LARGE SCALE GENOMIC DNA]</scope>
    <source>
        <strain>972 / ATCC 24843</strain>
    </source>
</reference>
<reference key="2">
    <citation type="journal article" date="2006" name="Nat. Biotechnol.">
        <title>ORFeome cloning and global analysis of protein localization in the fission yeast Schizosaccharomyces pombe.</title>
        <authorList>
            <person name="Matsuyama A."/>
            <person name="Arai R."/>
            <person name="Yashiroda Y."/>
            <person name="Shirai A."/>
            <person name="Kamata A."/>
            <person name="Sekido S."/>
            <person name="Kobayashi Y."/>
            <person name="Hashimoto A."/>
            <person name="Hamamoto M."/>
            <person name="Hiraoka Y."/>
            <person name="Horinouchi S."/>
            <person name="Yoshida M."/>
        </authorList>
    </citation>
    <scope>SUBCELLULAR LOCATION [LARGE SCALE ANALYSIS]</scope>
</reference>
<keyword id="KW-0496">Mitochondrion</keyword>
<keyword id="KW-1185">Reference proteome</keyword>
<keyword id="KW-0687">Ribonucleoprotein</keyword>
<keyword id="KW-0689">Ribosomal protein</keyword>
<keyword id="KW-0809">Transit peptide</keyword>
<organism>
    <name type="scientific">Schizosaccharomyces pombe (strain 972 / ATCC 24843)</name>
    <name type="common">Fission yeast</name>
    <dbReference type="NCBI Taxonomy" id="284812"/>
    <lineage>
        <taxon>Eukaryota</taxon>
        <taxon>Fungi</taxon>
        <taxon>Dikarya</taxon>
        <taxon>Ascomycota</taxon>
        <taxon>Taphrinomycotina</taxon>
        <taxon>Schizosaccharomycetes</taxon>
        <taxon>Schizosaccharomycetales</taxon>
        <taxon>Schizosaccharomycetaceae</taxon>
        <taxon>Schizosaccharomyces</taxon>
    </lineage>
</organism>
<sequence length="105" mass="12091">MRSSLKPVLSNLRFNSTIASESLRFHVSRTPSKNLPVYLDYKQRGTKILTLIRKIHGDSNALRLRLISTLKMSPKDVYVNKLTNQVVLKGNHIVTVREWLQDQGF</sequence>
<accession>Q10139</accession>